<accession>B0U6W0</accession>
<dbReference type="EC" id="1.8.1.2" evidence="1"/>
<dbReference type="EMBL" id="CP000941">
    <property type="protein sequence ID" value="ACA11826.1"/>
    <property type="molecule type" value="Genomic_DNA"/>
</dbReference>
<dbReference type="RefSeq" id="WP_004083704.1">
    <property type="nucleotide sequence ID" value="NC_010513.1"/>
</dbReference>
<dbReference type="SMR" id="B0U6W0"/>
<dbReference type="KEGG" id="xfm:Xfasm12_0838"/>
<dbReference type="HOGENOM" id="CLU_001975_3_2_6"/>
<dbReference type="UniPathway" id="UPA00140">
    <property type="reaction ID" value="UER00207"/>
</dbReference>
<dbReference type="GO" id="GO:0009337">
    <property type="term" value="C:sulfite reductase complex (NADPH)"/>
    <property type="evidence" value="ECO:0007669"/>
    <property type="project" value="InterPro"/>
</dbReference>
<dbReference type="GO" id="GO:0051539">
    <property type="term" value="F:4 iron, 4 sulfur cluster binding"/>
    <property type="evidence" value="ECO:0007669"/>
    <property type="project" value="UniProtKB-KW"/>
</dbReference>
<dbReference type="GO" id="GO:0020037">
    <property type="term" value="F:heme binding"/>
    <property type="evidence" value="ECO:0007669"/>
    <property type="project" value="InterPro"/>
</dbReference>
<dbReference type="GO" id="GO:0046872">
    <property type="term" value="F:metal ion binding"/>
    <property type="evidence" value="ECO:0007669"/>
    <property type="project" value="UniProtKB-KW"/>
</dbReference>
<dbReference type="GO" id="GO:0050661">
    <property type="term" value="F:NADP binding"/>
    <property type="evidence" value="ECO:0007669"/>
    <property type="project" value="InterPro"/>
</dbReference>
<dbReference type="GO" id="GO:0050311">
    <property type="term" value="F:sulfite reductase (ferredoxin) activity"/>
    <property type="evidence" value="ECO:0007669"/>
    <property type="project" value="TreeGrafter"/>
</dbReference>
<dbReference type="GO" id="GO:0004783">
    <property type="term" value="F:sulfite reductase (NADPH) activity"/>
    <property type="evidence" value="ECO:0007669"/>
    <property type="project" value="UniProtKB-UniRule"/>
</dbReference>
<dbReference type="GO" id="GO:0019344">
    <property type="term" value="P:cysteine biosynthetic process"/>
    <property type="evidence" value="ECO:0007669"/>
    <property type="project" value="UniProtKB-KW"/>
</dbReference>
<dbReference type="GO" id="GO:0070814">
    <property type="term" value="P:hydrogen sulfide biosynthetic process"/>
    <property type="evidence" value="ECO:0007669"/>
    <property type="project" value="UniProtKB-UniRule"/>
</dbReference>
<dbReference type="GO" id="GO:0000103">
    <property type="term" value="P:sulfate assimilation"/>
    <property type="evidence" value="ECO:0007669"/>
    <property type="project" value="UniProtKB-UniRule"/>
</dbReference>
<dbReference type="FunFam" id="3.30.413.10:FF:000003">
    <property type="entry name" value="Sulfite reductase [NADPH] hemoprotein beta-component"/>
    <property type="match status" value="1"/>
</dbReference>
<dbReference type="Gene3D" id="3.30.413.10">
    <property type="entry name" value="Sulfite Reductase Hemoprotein, domain 1"/>
    <property type="match status" value="2"/>
</dbReference>
<dbReference type="HAMAP" id="MF_01540">
    <property type="entry name" value="CysI"/>
    <property type="match status" value="1"/>
</dbReference>
<dbReference type="InterPro" id="IPR011786">
    <property type="entry name" value="CysI"/>
</dbReference>
<dbReference type="InterPro" id="IPR005117">
    <property type="entry name" value="NiRdtase/SiRdtase_haem-b_fer"/>
</dbReference>
<dbReference type="InterPro" id="IPR036136">
    <property type="entry name" value="Nit/Sulf_reduc_fer-like_dom_sf"/>
</dbReference>
<dbReference type="InterPro" id="IPR006067">
    <property type="entry name" value="NO2/SO3_Rdtase_4Fe4S_dom"/>
</dbReference>
<dbReference type="InterPro" id="IPR045169">
    <property type="entry name" value="NO2/SO3_Rdtase_4Fe4S_prot"/>
</dbReference>
<dbReference type="InterPro" id="IPR045854">
    <property type="entry name" value="NO2/SO3_Rdtase_4Fe4S_sf"/>
</dbReference>
<dbReference type="InterPro" id="IPR006066">
    <property type="entry name" value="NO2/SO3_Rdtase_FeS/sirohaem_BS"/>
</dbReference>
<dbReference type="NCBIfam" id="TIGR02041">
    <property type="entry name" value="CysI"/>
    <property type="match status" value="1"/>
</dbReference>
<dbReference type="NCBIfam" id="NF010029">
    <property type="entry name" value="PRK13504.1"/>
    <property type="match status" value="1"/>
</dbReference>
<dbReference type="PANTHER" id="PTHR11493:SF47">
    <property type="entry name" value="SULFITE REDUCTASE [NADPH] SUBUNIT BETA"/>
    <property type="match status" value="1"/>
</dbReference>
<dbReference type="PANTHER" id="PTHR11493">
    <property type="entry name" value="SULFITE REDUCTASE [NADPH] SUBUNIT BETA-RELATED"/>
    <property type="match status" value="1"/>
</dbReference>
<dbReference type="Pfam" id="PF01077">
    <property type="entry name" value="NIR_SIR"/>
    <property type="match status" value="1"/>
</dbReference>
<dbReference type="Pfam" id="PF03460">
    <property type="entry name" value="NIR_SIR_ferr"/>
    <property type="match status" value="2"/>
</dbReference>
<dbReference type="PRINTS" id="PR00397">
    <property type="entry name" value="SIROHAEM"/>
</dbReference>
<dbReference type="SUPFAM" id="SSF56014">
    <property type="entry name" value="Nitrite and sulphite reductase 4Fe-4S domain-like"/>
    <property type="match status" value="2"/>
</dbReference>
<dbReference type="SUPFAM" id="SSF55124">
    <property type="entry name" value="Nitrite/Sulfite reductase N-terminal domain-like"/>
    <property type="match status" value="2"/>
</dbReference>
<dbReference type="PROSITE" id="PS00365">
    <property type="entry name" value="NIR_SIR"/>
    <property type="match status" value="1"/>
</dbReference>
<reference key="1">
    <citation type="journal article" date="2010" name="J. Bacteriol.">
        <title>Whole genome sequences of two Xylella fastidiosa strains (M12 and M23) causing almond leaf scorch disease in California.</title>
        <authorList>
            <person name="Chen J."/>
            <person name="Xie G."/>
            <person name="Han S."/>
            <person name="Chertkov O."/>
            <person name="Sims D."/>
            <person name="Civerolo E.L."/>
        </authorList>
    </citation>
    <scope>NUCLEOTIDE SEQUENCE [LARGE SCALE GENOMIC DNA]</scope>
    <source>
        <strain>M12</strain>
    </source>
</reference>
<sequence length="568" mass="62879">MSSSSIEDIKGKSHRLRGSLLESLANPTTGALRESDQTLIKYHGSYQQDDRDLREERRRQKLEPAYQFMIRTRTPGGVITPQQWLQLDAIATRYANHSLRVTTRQAFQFHGVIKRELKTTMQAINAALIDTLAACGDVNRNVQVAANPLISRAHADLYTDAAHLSEHLLPNTRAYYEIWLDEKKVAGAGEEEEPIYGPHYLPRKFKIGFAAPPINDVDVFANDLGFIAVIVDKTLLGYNVTIGGGMGTTHGDPDTWPRIGNIIGFITRADLITISTAIVTTQRDFGNRTLRKRARFKYTIDDRGLDCIVGEIQQRAGITLQPARPFVFEHNGDRYGWIEGEDGHWHLTLLLPAGRIADTEGSTLLSGFREIAQLGIGEFRMTPNQNVVIAGISPGQRAAIDALVTQYGLDTGNRAPTALARHAMACVALPTCGLAMAEAERYLPDFNAKLQPILEKYGLAETPILLRISGCPNGCSRPYLAEIALVGKAPGRYNLMLGGDQRGQRLNTLYRENITETEILAALEPLLGRYQQKRLPSEGFGDFLHRTGIIALPPYPTHRHVISSTLQA</sequence>
<feature type="chain" id="PRO_0000388536" description="Sulfite reductase [NADPH] hemoprotein beta-component">
    <location>
        <begin position="1"/>
        <end position="568"/>
    </location>
</feature>
<feature type="binding site" evidence="1">
    <location>
        <position position="426"/>
    </location>
    <ligand>
        <name>[4Fe-4S] cluster</name>
        <dbReference type="ChEBI" id="CHEBI:49883"/>
    </ligand>
</feature>
<feature type="binding site" evidence="1">
    <location>
        <position position="432"/>
    </location>
    <ligand>
        <name>[4Fe-4S] cluster</name>
        <dbReference type="ChEBI" id="CHEBI:49883"/>
    </ligand>
</feature>
<feature type="binding site" evidence="1">
    <location>
        <position position="471"/>
    </location>
    <ligand>
        <name>[4Fe-4S] cluster</name>
        <dbReference type="ChEBI" id="CHEBI:49883"/>
    </ligand>
</feature>
<feature type="binding site" evidence="1">
    <location>
        <position position="475"/>
    </location>
    <ligand>
        <name>[4Fe-4S] cluster</name>
        <dbReference type="ChEBI" id="CHEBI:49883"/>
    </ligand>
</feature>
<feature type="binding site" description="axial binding residue" evidence="1">
    <location>
        <position position="475"/>
    </location>
    <ligand>
        <name>siroheme</name>
        <dbReference type="ChEBI" id="CHEBI:60052"/>
    </ligand>
    <ligandPart>
        <name>Fe</name>
        <dbReference type="ChEBI" id="CHEBI:18248"/>
    </ligandPart>
</feature>
<proteinExistence type="inferred from homology"/>
<protein>
    <recommendedName>
        <fullName evidence="1">Sulfite reductase [NADPH] hemoprotein beta-component</fullName>
        <shortName evidence="1">SiR-HP</shortName>
        <shortName evidence="1">SiRHP</shortName>
        <ecNumber evidence="1">1.8.1.2</ecNumber>
    </recommendedName>
</protein>
<gene>
    <name evidence="1" type="primary">cysI</name>
    <name type="ordered locus">Xfasm12_0838</name>
</gene>
<organism>
    <name type="scientific">Xylella fastidiosa (strain M12)</name>
    <dbReference type="NCBI Taxonomy" id="405440"/>
    <lineage>
        <taxon>Bacteria</taxon>
        <taxon>Pseudomonadati</taxon>
        <taxon>Pseudomonadota</taxon>
        <taxon>Gammaproteobacteria</taxon>
        <taxon>Lysobacterales</taxon>
        <taxon>Lysobacteraceae</taxon>
        <taxon>Xylella</taxon>
    </lineage>
</organism>
<keyword id="KW-0004">4Fe-4S</keyword>
<keyword id="KW-0028">Amino-acid biosynthesis</keyword>
<keyword id="KW-0198">Cysteine biosynthesis</keyword>
<keyword id="KW-0349">Heme</keyword>
<keyword id="KW-0408">Iron</keyword>
<keyword id="KW-0411">Iron-sulfur</keyword>
<keyword id="KW-0479">Metal-binding</keyword>
<keyword id="KW-0521">NADP</keyword>
<keyword id="KW-0560">Oxidoreductase</keyword>
<evidence type="ECO:0000255" key="1">
    <source>
        <dbReference type="HAMAP-Rule" id="MF_01540"/>
    </source>
</evidence>
<comment type="function">
    <text evidence="1">Component of the sulfite reductase complex that catalyzes the 6-electron reduction of sulfite to sulfide. This is one of several activities required for the biosynthesis of L-cysteine from sulfate.</text>
</comment>
<comment type="catalytic activity">
    <reaction evidence="1">
        <text>hydrogen sulfide + 3 NADP(+) + 3 H2O = sulfite + 3 NADPH + 4 H(+)</text>
        <dbReference type="Rhea" id="RHEA:13801"/>
        <dbReference type="ChEBI" id="CHEBI:15377"/>
        <dbReference type="ChEBI" id="CHEBI:15378"/>
        <dbReference type="ChEBI" id="CHEBI:17359"/>
        <dbReference type="ChEBI" id="CHEBI:29919"/>
        <dbReference type="ChEBI" id="CHEBI:57783"/>
        <dbReference type="ChEBI" id="CHEBI:58349"/>
        <dbReference type="EC" id="1.8.1.2"/>
    </reaction>
</comment>
<comment type="cofactor">
    <cofactor evidence="1">
        <name>siroheme</name>
        <dbReference type="ChEBI" id="CHEBI:60052"/>
    </cofactor>
    <text evidence="1">Binds 1 siroheme per subunit.</text>
</comment>
<comment type="cofactor">
    <cofactor evidence="1">
        <name>[4Fe-4S] cluster</name>
        <dbReference type="ChEBI" id="CHEBI:49883"/>
    </cofactor>
    <text evidence="1">Binds 1 [4Fe-4S] cluster per subunit.</text>
</comment>
<comment type="pathway">
    <text evidence="1">Sulfur metabolism; hydrogen sulfide biosynthesis; hydrogen sulfide from sulfite (NADPH route): step 1/1.</text>
</comment>
<comment type="subunit">
    <text evidence="1">Alpha(8)-beta(8). The alpha component is a flavoprotein, the beta component is a hemoprotein.</text>
</comment>
<comment type="similarity">
    <text evidence="1">Belongs to the nitrite and sulfite reductase 4Fe-4S domain family.</text>
</comment>
<name>CYSI_XYLFM</name>